<gene>
    <name evidence="1" type="primary">murB</name>
    <name type="ordered locus">Dde_1044</name>
</gene>
<evidence type="ECO:0000255" key="1">
    <source>
        <dbReference type="HAMAP-Rule" id="MF_00037"/>
    </source>
</evidence>
<sequence>MKPVILSGPVLKERTTLRLGGQALAEVRLDDMHAFDGLPRVLERLGGTPAVLGRGSNILARDGELPLVIINPALKAEPEAWADPQAEDRVLVRVAAGVRLPVLLGRLAAQGLSGLEGLAGVPGTVGGAVAMNAGSYGNDMGSVLSSVEIFSAGTGMICVPRSQCRCEYRHFSVPAAGGWFVVAAVTLQLRRSTATAVRDAMRSNALLKKKTQPVTEHSAGCVFKNPADGISAGRLLDQCGFRGRGKGGMAFSSLHANFLVNKAQGTSDDAMDLINDARHAVERATGHYLELEVKIWPWQ</sequence>
<accession>Q313Q1</accession>
<protein>
    <recommendedName>
        <fullName evidence="1">UDP-N-acetylenolpyruvoylglucosamine reductase</fullName>
        <ecNumber evidence="1">1.3.1.98</ecNumber>
    </recommendedName>
    <alternativeName>
        <fullName evidence="1">UDP-N-acetylmuramate dehydrogenase</fullName>
    </alternativeName>
</protein>
<feature type="chain" id="PRO_0000224681" description="UDP-N-acetylenolpyruvoylglucosamine reductase">
    <location>
        <begin position="1"/>
        <end position="299"/>
    </location>
</feature>
<feature type="domain" description="FAD-binding PCMH-type" evidence="1">
    <location>
        <begin position="19"/>
        <end position="192"/>
    </location>
</feature>
<feature type="active site" evidence="1">
    <location>
        <position position="169"/>
    </location>
</feature>
<feature type="active site" description="Proton donor" evidence="1">
    <location>
        <position position="221"/>
    </location>
</feature>
<feature type="active site" evidence="1">
    <location>
        <position position="292"/>
    </location>
</feature>
<keyword id="KW-0131">Cell cycle</keyword>
<keyword id="KW-0132">Cell division</keyword>
<keyword id="KW-0133">Cell shape</keyword>
<keyword id="KW-0961">Cell wall biogenesis/degradation</keyword>
<keyword id="KW-0963">Cytoplasm</keyword>
<keyword id="KW-0274">FAD</keyword>
<keyword id="KW-0285">Flavoprotein</keyword>
<keyword id="KW-0521">NADP</keyword>
<keyword id="KW-0560">Oxidoreductase</keyword>
<keyword id="KW-0573">Peptidoglycan synthesis</keyword>
<keyword id="KW-1185">Reference proteome</keyword>
<organism>
    <name type="scientific">Oleidesulfovibrio alaskensis (strain ATCC BAA-1058 / DSM 17464 / G20)</name>
    <name type="common">Desulfovibrio alaskensis</name>
    <dbReference type="NCBI Taxonomy" id="207559"/>
    <lineage>
        <taxon>Bacteria</taxon>
        <taxon>Pseudomonadati</taxon>
        <taxon>Thermodesulfobacteriota</taxon>
        <taxon>Desulfovibrionia</taxon>
        <taxon>Desulfovibrionales</taxon>
        <taxon>Desulfovibrionaceae</taxon>
        <taxon>Oleidesulfovibrio</taxon>
    </lineage>
</organism>
<name>MURB_OLEA2</name>
<proteinExistence type="inferred from homology"/>
<dbReference type="EC" id="1.3.1.98" evidence="1"/>
<dbReference type="EMBL" id="CP000112">
    <property type="protein sequence ID" value="ABB37845.1"/>
    <property type="molecule type" value="Genomic_DNA"/>
</dbReference>
<dbReference type="RefSeq" id="WP_011367082.1">
    <property type="nucleotide sequence ID" value="NC_007519.1"/>
</dbReference>
<dbReference type="SMR" id="Q313Q1"/>
<dbReference type="STRING" id="207559.Dde_1044"/>
<dbReference type="KEGG" id="dde:Dde_1044"/>
<dbReference type="eggNOG" id="COG0812">
    <property type="taxonomic scope" value="Bacteria"/>
</dbReference>
<dbReference type="HOGENOM" id="CLU_035304_1_1_7"/>
<dbReference type="UniPathway" id="UPA00219"/>
<dbReference type="Proteomes" id="UP000002710">
    <property type="component" value="Chromosome"/>
</dbReference>
<dbReference type="GO" id="GO:0005829">
    <property type="term" value="C:cytosol"/>
    <property type="evidence" value="ECO:0007669"/>
    <property type="project" value="TreeGrafter"/>
</dbReference>
<dbReference type="GO" id="GO:0071949">
    <property type="term" value="F:FAD binding"/>
    <property type="evidence" value="ECO:0007669"/>
    <property type="project" value="InterPro"/>
</dbReference>
<dbReference type="GO" id="GO:0008762">
    <property type="term" value="F:UDP-N-acetylmuramate dehydrogenase activity"/>
    <property type="evidence" value="ECO:0007669"/>
    <property type="project" value="UniProtKB-UniRule"/>
</dbReference>
<dbReference type="GO" id="GO:0051301">
    <property type="term" value="P:cell division"/>
    <property type="evidence" value="ECO:0007669"/>
    <property type="project" value="UniProtKB-KW"/>
</dbReference>
<dbReference type="GO" id="GO:0071555">
    <property type="term" value="P:cell wall organization"/>
    <property type="evidence" value="ECO:0007669"/>
    <property type="project" value="UniProtKB-KW"/>
</dbReference>
<dbReference type="GO" id="GO:0009252">
    <property type="term" value="P:peptidoglycan biosynthetic process"/>
    <property type="evidence" value="ECO:0007669"/>
    <property type="project" value="UniProtKB-UniRule"/>
</dbReference>
<dbReference type="GO" id="GO:0008360">
    <property type="term" value="P:regulation of cell shape"/>
    <property type="evidence" value="ECO:0007669"/>
    <property type="project" value="UniProtKB-KW"/>
</dbReference>
<dbReference type="Gene3D" id="3.30.465.10">
    <property type="match status" value="1"/>
</dbReference>
<dbReference type="Gene3D" id="3.90.78.10">
    <property type="entry name" value="UDP-N-acetylenolpyruvoylglucosamine reductase, C-terminal domain"/>
    <property type="match status" value="1"/>
</dbReference>
<dbReference type="Gene3D" id="3.30.43.10">
    <property type="entry name" value="Uridine Diphospho-n-acetylenolpyruvylglucosamine Reductase, domain 2"/>
    <property type="match status" value="1"/>
</dbReference>
<dbReference type="HAMAP" id="MF_00037">
    <property type="entry name" value="MurB"/>
    <property type="match status" value="1"/>
</dbReference>
<dbReference type="InterPro" id="IPR016166">
    <property type="entry name" value="FAD-bd_PCMH"/>
</dbReference>
<dbReference type="InterPro" id="IPR036318">
    <property type="entry name" value="FAD-bd_PCMH-like_sf"/>
</dbReference>
<dbReference type="InterPro" id="IPR016167">
    <property type="entry name" value="FAD-bd_PCMH_sub1"/>
</dbReference>
<dbReference type="InterPro" id="IPR016169">
    <property type="entry name" value="FAD-bd_PCMH_sub2"/>
</dbReference>
<dbReference type="InterPro" id="IPR003170">
    <property type="entry name" value="MurB"/>
</dbReference>
<dbReference type="InterPro" id="IPR011601">
    <property type="entry name" value="MurB_C"/>
</dbReference>
<dbReference type="InterPro" id="IPR036635">
    <property type="entry name" value="MurB_C_sf"/>
</dbReference>
<dbReference type="InterPro" id="IPR006094">
    <property type="entry name" value="Oxid_FAD_bind_N"/>
</dbReference>
<dbReference type="NCBIfam" id="TIGR00179">
    <property type="entry name" value="murB"/>
    <property type="match status" value="1"/>
</dbReference>
<dbReference type="PANTHER" id="PTHR21071">
    <property type="entry name" value="UDP-N-ACETYLENOLPYRUVOYLGLUCOSAMINE REDUCTASE"/>
    <property type="match status" value="1"/>
</dbReference>
<dbReference type="PANTHER" id="PTHR21071:SF4">
    <property type="entry name" value="UDP-N-ACETYLENOLPYRUVOYLGLUCOSAMINE REDUCTASE"/>
    <property type="match status" value="1"/>
</dbReference>
<dbReference type="Pfam" id="PF01565">
    <property type="entry name" value="FAD_binding_4"/>
    <property type="match status" value="1"/>
</dbReference>
<dbReference type="Pfam" id="PF02873">
    <property type="entry name" value="MurB_C"/>
    <property type="match status" value="1"/>
</dbReference>
<dbReference type="SUPFAM" id="SSF56176">
    <property type="entry name" value="FAD-binding/transporter-associated domain-like"/>
    <property type="match status" value="1"/>
</dbReference>
<dbReference type="SUPFAM" id="SSF56194">
    <property type="entry name" value="Uridine diphospho-N-Acetylenolpyruvylglucosamine reductase, MurB, C-terminal domain"/>
    <property type="match status" value="1"/>
</dbReference>
<dbReference type="PROSITE" id="PS51387">
    <property type="entry name" value="FAD_PCMH"/>
    <property type="match status" value="1"/>
</dbReference>
<reference key="1">
    <citation type="journal article" date="2011" name="J. Bacteriol.">
        <title>Complete genome sequence and updated annotation of Desulfovibrio alaskensis G20.</title>
        <authorList>
            <person name="Hauser L.J."/>
            <person name="Land M.L."/>
            <person name="Brown S.D."/>
            <person name="Larimer F."/>
            <person name="Keller K.L."/>
            <person name="Rapp-Giles B.J."/>
            <person name="Price M.N."/>
            <person name="Lin M."/>
            <person name="Bruce D.C."/>
            <person name="Detter J.C."/>
            <person name="Tapia R."/>
            <person name="Han C.S."/>
            <person name="Goodwin L.A."/>
            <person name="Cheng J.F."/>
            <person name="Pitluck S."/>
            <person name="Copeland A."/>
            <person name="Lucas S."/>
            <person name="Nolan M."/>
            <person name="Lapidus A.L."/>
            <person name="Palumbo A.V."/>
            <person name="Wall J.D."/>
        </authorList>
    </citation>
    <scope>NUCLEOTIDE SEQUENCE [LARGE SCALE GENOMIC DNA]</scope>
    <source>
        <strain>ATCC BAA-1058 / DSM 17464 / G20</strain>
    </source>
</reference>
<comment type="function">
    <text evidence="1">Cell wall formation.</text>
</comment>
<comment type="catalytic activity">
    <reaction evidence="1">
        <text>UDP-N-acetyl-alpha-D-muramate + NADP(+) = UDP-N-acetyl-3-O-(1-carboxyvinyl)-alpha-D-glucosamine + NADPH + H(+)</text>
        <dbReference type="Rhea" id="RHEA:12248"/>
        <dbReference type="ChEBI" id="CHEBI:15378"/>
        <dbReference type="ChEBI" id="CHEBI:57783"/>
        <dbReference type="ChEBI" id="CHEBI:58349"/>
        <dbReference type="ChEBI" id="CHEBI:68483"/>
        <dbReference type="ChEBI" id="CHEBI:70757"/>
        <dbReference type="EC" id="1.3.1.98"/>
    </reaction>
</comment>
<comment type="cofactor">
    <cofactor evidence="1">
        <name>FAD</name>
        <dbReference type="ChEBI" id="CHEBI:57692"/>
    </cofactor>
</comment>
<comment type="pathway">
    <text evidence="1">Cell wall biogenesis; peptidoglycan biosynthesis.</text>
</comment>
<comment type="subcellular location">
    <subcellularLocation>
        <location evidence="1">Cytoplasm</location>
    </subcellularLocation>
</comment>
<comment type="similarity">
    <text evidence="1">Belongs to the MurB family.</text>
</comment>